<dbReference type="EC" id="1.3.1.-" evidence="1"/>
<dbReference type="EC" id="1.3.1.91" evidence="1"/>
<dbReference type="EMBL" id="AE003852">
    <property type="protein sequence ID" value="AAF93552.1"/>
    <property type="molecule type" value="Genomic_DNA"/>
</dbReference>
<dbReference type="PIR" id="G82330">
    <property type="entry name" value="G82330"/>
</dbReference>
<dbReference type="RefSeq" id="NP_230033.1">
    <property type="nucleotide sequence ID" value="NC_002505.1"/>
</dbReference>
<dbReference type="RefSeq" id="WP_001884460.1">
    <property type="nucleotide sequence ID" value="NZ_LT906614.1"/>
</dbReference>
<dbReference type="SMR" id="Q9KUX9"/>
<dbReference type="STRING" id="243277.VC_0379"/>
<dbReference type="DNASU" id="2615022"/>
<dbReference type="EnsemblBacteria" id="AAF93552">
    <property type="protein sequence ID" value="AAF93552"/>
    <property type="gene ID" value="VC_0379"/>
</dbReference>
<dbReference type="GeneID" id="89515675"/>
<dbReference type="KEGG" id="vch:VC_0379"/>
<dbReference type="PATRIC" id="fig|243277.26.peg.354"/>
<dbReference type="eggNOG" id="COG0042">
    <property type="taxonomic scope" value="Bacteria"/>
</dbReference>
<dbReference type="HOGENOM" id="CLU_013299_2_1_6"/>
<dbReference type="Proteomes" id="UP000000584">
    <property type="component" value="Chromosome 1"/>
</dbReference>
<dbReference type="GO" id="GO:0050660">
    <property type="term" value="F:flavin adenine dinucleotide binding"/>
    <property type="evidence" value="ECO:0007669"/>
    <property type="project" value="InterPro"/>
</dbReference>
<dbReference type="GO" id="GO:0010181">
    <property type="term" value="F:FMN binding"/>
    <property type="evidence" value="ECO:0007669"/>
    <property type="project" value="UniProtKB-UniRule"/>
</dbReference>
<dbReference type="GO" id="GO:0000049">
    <property type="term" value="F:tRNA binding"/>
    <property type="evidence" value="ECO:0007669"/>
    <property type="project" value="UniProtKB-UniRule"/>
</dbReference>
<dbReference type="GO" id="GO:0102264">
    <property type="term" value="F:tRNA-dihydrouridine20 synthase activity"/>
    <property type="evidence" value="ECO:0007669"/>
    <property type="project" value="UniProtKB-EC"/>
</dbReference>
<dbReference type="GO" id="GO:0102266">
    <property type="term" value="F:tRNA-dihydrouridine20a synthase activity"/>
    <property type="evidence" value="ECO:0007669"/>
    <property type="project" value="RHEA"/>
</dbReference>
<dbReference type="CDD" id="cd02801">
    <property type="entry name" value="DUS_like_FMN"/>
    <property type="match status" value="1"/>
</dbReference>
<dbReference type="FunFam" id="1.20.120.1460:FF:000001">
    <property type="entry name" value="tRNA-dihydrouridine(20/20a) synthase"/>
    <property type="match status" value="1"/>
</dbReference>
<dbReference type="FunFam" id="3.20.20.70:FF:000083">
    <property type="entry name" value="tRNA-dihydrouridine(20/20a) synthase"/>
    <property type="match status" value="1"/>
</dbReference>
<dbReference type="Gene3D" id="1.20.120.1460">
    <property type="match status" value="1"/>
</dbReference>
<dbReference type="Gene3D" id="3.20.20.70">
    <property type="entry name" value="Aldolase class I"/>
    <property type="match status" value="1"/>
</dbReference>
<dbReference type="HAMAP" id="MF_02041">
    <property type="entry name" value="DusA_subfam"/>
    <property type="match status" value="1"/>
</dbReference>
<dbReference type="InterPro" id="IPR013785">
    <property type="entry name" value="Aldolase_TIM"/>
</dbReference>
<dbReference type="InterPro" id="IPR035587">
    <property type="entry name" value="DUS-like_FMN-bd"/>
</dbReference>
<dbReference type="InterPro" id="IPR001269">
    <property type="entry name" value="DUS_fam"/>
</dbReference>
<dbReference type="InterPro" id="IPR004653">
    <property type="entry name" value="DusA"/>
</dbReference>
<dbReference type="InterPro" id="IPR018517">
    <property type="entry name" value="tRNA_hU_synthase_CS"/>
</dbReference>
<dbReference type="NCBIfam" id="NF008774">
    <property type="entry name" value="PRK11815.1"/>
    <property type="match status" value="1"/>
</dbReference>
<dbReference type="NCBIfam" id="TIGR00742">
    <property type="entry name" value="yjbN"/>
    <property type="match status" value="1"/>
</dbReference>
<dbReference type="PANTHER" id="PTHR42907">
    <property type="entry name" value="FMN-LINKED OXIDOREDUCTASES SUPERFAMILY PROTEIN"/>
    <property type="match status" value="1"/>
</dbReference>
<dbReference type="PANTHER" id="PTHR42907:SF1">
    <property type="entry name" value="FMN-LINKED OXIDOREDUCTASES SUPERFAMILY PROTEIN"/>
    <property type="match status" value="1"/>
</dbReference>
<dbReference type="Pfam" id="PF01207">
    <property type="entry name" value="Dus"/>
    <property type="match status" value="1"/>
</dbReference>
<dbReference type="PIRSF" id="PIRSF006621">
    <property type="entry name" value="Dus"/>
    <property type="match status" value="1"/>
</dbReference>
<dbReference type="SUPFAM" id="SSF51395">
    <property type="entry name" value="FMN-linked oxidoreductases"/>
    <property type="match status" value="1"/>
</dbReference>
<dbReference type="PROSITE" id="PS01136">
    <property type="entry name" value="UPF0034"/>
    <property type="match status" value="1"/>
</dbReference>
<proteinExistence type="inferred from homology"/>
<feature type="chain" id="PRO_0000162076" description="tRNA-dihydrouridine(20/20a) synthase">
    <location>
        <begin position="1"/>
        <end position="327"/>
    </location>
</feature>
<feature type="active site" description="Proton donor" evidence="1">
    <location>
        <position position="93"/>
    </location>
</feature>
<feature type="binding site" evidence="1">
    <location>
        <begin position="11"/>
        <end position="13"/>
    </location>
    <ligand>
        <name>FMN</name>
        <dbReference type="ChEBI" id="CHEBI:58210"/>
    </ligand>
</feature>
<feature type="binding site" evidence="1">
    <location>
        <position position="63"/>
    </location>
    <ligand>
        <name>FMN</name>
        <dbReference type="ChEBI" id="CHEBI:58210"/>
    </ligand>
</feature>
<feature type="binding site" evidence="1">
    <location>
        <position position="132"/>
    </location>
    <ligand>
        <name>FMN</name>
        <dbReference type="ChEBI" id="CHEBI:58210"/>
    </ligand>
</feature>
<feature type="binding site" evidence="1">
    <location>
        <position position="165"/>
    </location>
    <ligand>
        <name>FMN</name>
        <dbReference type="ChEBI" id="CHEBI:58210"/>
    </ligand>
</feature>
<feature type="binding site" evidence="1">
    <location>
        <begin position="205"/>
        <end position="207"/>
    </location>
    <ligand>
        <name>FMN</name>
        <dbReference type="ChEBI" id="CHEBI:58210"/>
    </ligand>
</feature>
<feature type="binding site" evidence="1">
    <location>
        <begin position="227"/>
        <end position="228"/>
    </location>
    <ligand>
        <name>FMN</name>
        <dbReference type="ChEBI" id="CHEBI:58210"/>
    </ligand>
</feature>
<feature type="site" description="Interacts with tRNA" evidence="1">
    <location>
        <position position="90"/>
    </location>
</feature>
<feature type="site" description="Interacts with tRNA; defines subfamily-specific binding signature" evidence="1">
    <location>
        <position position="177"/>
    </location>
</feature>
<feature type="site" description="Interacts with tRNA" evidence="1">
    <location>
        <position position="180"/>
    </location>
</feature>
<feature type="site" description="Interacts with tRNA; defines subfamily-specific binding signature" evidence="1">
    <location>
        <position position="293"/>
    </location>
</feature>
<feature type="site" description="Interacts with tRNA; defines subfamily-specific binding signature" evidence="1">
    <location>
        <position position="296"/>
    </location>
</feature>
<sequence length="327" mass="36791">MTHSCRLSVAPMLDWTDRHCRYFHRLLSAQTLLYTEMVTTGAIIHGRGDFLAYNQEEHPVALQFGGSNPKDLAHCAKLAQERGYDEINLNVGCPSDRVQNGRFGACLMGEPDLVAECVAAMRAVVDIPVTVKTRIGIDDQDSYEFLTQFIATVAEKGGCEQFTIHARKAWLSGLSPKENREIPPLDYPRAYQIKRDFPHLTIAVNGGVKSLEEAKLHLQHLDGVMIGREAYQNPYLLAEVDQQIFGLETPVKKRSQVIHEMMPYIERELSQGTHLGHMTRHMLGLFQNMPGARQWRRHISENAHKPGAGLEVVEQALAKIPYQELGV</sequence>
<organism>
    <name type="scientific">Vibrio cholerae serotype O1 (strain ATCC 39315 / El Tor Inaba N16961)</name>
    <dbReference type="NCBI Taxonomy" id="243277"/>
    <lineage>
        <taxon>Bacteria</taxon>
        <taxon>Pseudomonadati</taxon>
        <taxon>Pseudomonadota</taxon>
        <taxon>Gammaproteobacteria</taxon>
        <taxon>Vibrionales</taxon>
        <taxon>Vibrionaceae</taxon>
        <taxon>Vibrio</taxon>
    </lineage>
</organism>
<reference key="1">
    <citation type="journal article" date="2000" name="Nature">
        <title>DNA sequence of both chromosomes of the cholera pathogen Vibrio cholerae.</title>
        <authorList>
            <person name="Heidelberg J.F."/>
            <person name="Eisen J.A."/>
            <person name="Nelson W.C."/>
            <person name="Clayton R.A."/>
            <person name="Gwinn M.L."/>
            <person name="Dodson R.J."/>
            <person name="Haft D.H."/>
            <person name="Hickey E.K."/>
            <person name="Peterson J.D."/>
            <person name="Umayam L.A."/>
            <person name="Gill S.R."/>
            <person name="Nelson K.E."/>
            <person name="Read T.D."/>
            <person name="Tettelin H."/>
            <person name="Richardson D.L."/>
            <person name="Ermolaeva M.D."/>
            <person name="Vamathevan J.J."/>
            <person name="Bass S."/>
            <person name="Qin H."/>
            <person name="Dragoi I."/>
            <person name="Sellers P."/>
            <person name="McDonald L.A."/>
            <person name="Utterback T.R."/>
            <person name="Fleischmann R.D."/>
            <person name="Nierman W.C."/>
            <person name="White O."/>
            <person name="Salzberg S.L."/>
            <person name="Smith H.O."/>
            <person name="Colwell R.R."/>
            <person name="Mekalanos J.J."/>
            <person name="Venter J.C."/>
            <person name="Fraser C.M."/>
        </authorList>
    </citation>
    <scope>NUCLEOTIDE SEQUENCE [LARGE SCALE GENOMIC DNA]</scope>
    <source>
        <strain>ATCC 39315 / El Tor Inaba N16961</strain>
    </source>
</reference>
<name>DUSA_VIBCH</name>
<gene>
    <name evidence="1" type="primary">dusA</name>
    <name type="ordered locus">VC_0379</name>
</gene>
<evidence type="ECO:0000255" key="1">
    <source>
        <dbReference type="HAMAP-Rule" id="MF_02041"/>
    </source>
</evidence>
<protein>
    <recommendedName>
        <fullName evidence="1">tRNA-dihydrouridine(20/20a) synthase</fullName>
        <ecNumber evidence="1">1.3.1.-</ecNumber>
        <ecNumber evidence="1">1.3.1.91</ecNumber>
    </recommendedName>
    <alternativeName>
        <fullName evidence="1">U20-specific dihydrouridine synthase</fullName>
        <shortName evidence="1">U20-specific Dus</shortName>
    </alternativeName>
    <alternativeName>
        <fullName evidence="1">tRNA-dihydrouridine synthase A</fullName>
    </alternativeName>
</protein>
<accession>Q9KUX9</accession>
<keyword id="KW-0285">Flavoprotein</keyword>
<keyword id="KW-0288">FMN</keyword>
<keyword id="KW-0521">NADP</keyword>
<keyword id="KW-0560">Oxidoreductase</keyword>
<keyword id="KW-1185">Reference proteome</keyword>
<keyword id="KW-0694">RNA-binding</keyword>
<keyword id="KW-0819">tRNA processing</keyword>
<keyword id="KW-0820">tRNA-binding</keyword>
<comment type="function">
    <text evidence="1">Catalyzes the synthesis of 5,6-dihydrouridine (D), a modified base found in the D-loop of most tRNAs, via the reduction of the C5-C6 double bond in target uridines. Specifically modifies U20 and U20a in tRNAs.</text>
</comment>
<comment type="catalytic activity">
    <reaction evidence="1">
        <text>5,6-dihydrouridine(20) in tRNA + NADP(+) = uridine(20) in tRNA + NADPH + H(+)</text>
        <dbReference type="Rhea" id="RHEA:53336"/>
        <dbReference type="Rhea" id="RHEA-COMP:13533"/>
        <dbReference type="Rhea" id="RHEA-COMP:13534"/>
        <dbReference type="ChEBI" id="CHEBI:15378"/>
        <dbReference type="ChEBI" id="CHEBI:57783"/>
        <dbReference type="ChEBI" id="CHEBI:58349"/>
        <dbReference type="ChEBI" id="CHEBI:65315"/>
        <dbReference type="ChEBI" id="CHEBI:74443"/>
        <dbReference type="EC" id="1.3.1.91"/>
    </reaction>
</comment>
<comment type="catalytic activity">
    <reaction evidence="1">
        <text>5,6-dihydrouridine(20) in tRNA + NAD(+) = uridine(20) in tRNA + NADH + H(+)</text>
        <dbReference type="Rhea" id="RHEA:53340"/>
        <dbReference type="Rhea" id="RHEA-COMP:13533"/>
        <dbReference type="Rhea" id="RHEA-COMP:13534"/>
        <dbReference type="ChEBI" id="CHEBI:15378"/>
        <dbReference type="ChEBI" id="CHEBI:57540"/>
        <dbReference type="ChEBI" id="CHEBI:57945"/>
        <dbReference type="ChEBI" id="CHEBI:65315"/>
        <dbReference type="ChEBI" id="CHEBI:74443"/>
        <dbReference type="EC" id="1.3.1.91"/>
    </reaction>
</comment>
<comment type="catalytic activity">
    <reaction evidence="1">
        <text>5,6-dihydrouridine(20a) in tRNA + NADP(+) = uridine(20a) in tRNA + NADPH + H(+)</text>
        <dbReference type="Rhea" id="RHEA:53344"/>
        <dbReference type="Rhea" id="RHEA-COMP:13535"/>
        <dbReference type="Rhea" id="RHEA-COMP:13536"/>
        <dbReference type="ChEBI" id="CHEBI:15378"/>
        <dbReference type="ChEBI" id="CHEBI:57783"/>
        <dbReference type="ChEBI" id="CHEBI:58349"/>
        <dbReference type="ChEBI" id="CHEBI:65315"/>
        <dbReference type="ChEBI" id="CHEBI:74443"/>
    </reaction>
</comment>
<comment type="catalytic activity">
    <reaction evidence="1">
        <text>5,6-dihydrouridine(20a) in tRNA + NAD(+) = uridine(20a) in tRNA + NADH + H(+)</text>
        <dbReference type="Rhea" id="RHEA:53348"/>
        <dbReference type="Rhea" id="RHEA-COMP:13535"/>
        <dbReference type="Rhea" id="RHEA-COMP:13536"/>
        <dbReference type="ChEBI" id="CHEBI:15378"/>
        <dbReference type="ChEBI" id="CHEBI:57540"/>
        <dbReference type="ChEBI" id="CHEBI:57945"/>
        <dbReference type="ChEBI" id="CHEBI:65315"/>
        <dbReference type="ChEBI" id="CHEBI:74443"/>
    </reaction>
</comment>
<comment type="cofactor">
    <cofactor evidence="1">
        <name>FMN</name>
        <dbReference type="ChEBI" id="CHEBI:58210"/>
    </cofactor>
</comment>
<comment type="similarity">
    <text evidence="1">Belongs to the Dus family. DusA subfamily.</text>
</comment>